<dbReference type="GO" id="GO:0005576">
    <property type="term" value="C:extracellular region"/>
    <property type="evidence" value="ECO:0007669"/>
    <property type="project" value="UniProtKB-SubCell"/>
</dbReference>
<dbReference type="GO" id="GO:0007218">
    <property type="term" value="P:neuropeptide signaling pathway"/>
    <property type="evidence" value="ECO:0007669"/>
    <property type="project" value="UniProtKB-KW"/>
</dbReference>
<comment type="subcellular location">
    <subcellularLocation>
        <location evidence="1">Secreted</location>
    </subcellularLocation>
</comment>
<comment type="tissue specificity">
    <text evidence="3">Expressed in the CNS and midgut but not in the ring gland, thoracic perisymapthetic organs (tPSO) or abdominal perisymapthetic organs (aPSO) (at protein level).</text>
</comment>
<comment type="developmental stage">
    <text evidence="3">Detected in larvae.</text>
</comment>
<comment type="mass spectrometry"/>
<comment type="similarity">
    <text evidence="2">Belongs to the FARP (FMRFamide related peptide) family.</text>
</comment>
<accession>B3EWH1</accession>
<reference evidence="5" key="1">
    <citation type="journal article" date="2012" name="PLoS ONE">
        <title>Peptidomics of the agriculturally damaging larval stage of the cabbage root fly Delia radicum (Diptera: Anthomyiidae).</title>
        <authorList>
            <person name="Zoephel J."/>
            <person name="Reiher W."/>
            <person name="Rexer K.-H."/>
            <person name="Kahnt J."/>
            <person name="Wegener C."/>
        </authorList>
    </citation>
    <scope>PROTEIN SEQUENCE</scope>
    <scope>TISSUE SPECIFICITY</scope>
    <scope>DEVELOPMENTAL STAGE</scope>
    <scope>MASS SPECTROMETRY</scope>
    <scope>AMIDATION AT PHE-12</scope>
    <source>
        <tissue evidence="3">CNS</tissue>
    </source>
</reference>
<organism>
    <name type="scientific">Delia radicum</name>
    <name type="common">Cabbage root fly</name>
    <name type="synonym">Anthomyia brassicae</name>
    <dbReference type="NCBI Taxonomy" id="30064"/>
    <lineage>
        <taxon>Eukaryota</taxon>
        <taxon>Metazoa</taxon>
        <taxon>Ecdysozoa</taxon>
        <taxon>Arthropoda</taxon>
        <taxon>Hexapoda</taxon>
        <taxon>Insecta</taxon>
        <taxon>Pterygota</taxon>
        <taxon>Neoptera</taxon>
        <taxon>Endopterygota</taxon>
        <taxon>Diptera</taxon>
        <taxon>Brachycera</taxon>
        <taxon>Muscomorpha</taxon>
        <taxon>Muscoidea</taxon>
        <taxon>Anthomyiidae</taxon>
        <taxon>Anthomyiinae</taxon>
        <taxon>Delia</taxon>
    </lineage>
</organism>
<feature type="peptide" id="PRO_0000419700" description="SIFamide-related peptide" evidence="3">
    <location>
        <begin position="1"/>
        <end position="12"/>
    </location>
</feature>
<feature type="modified residue" description="Phenylalanine amide" evidence="3">
    <location>
        <position position="12"/>
    </location>
</feature>
<feature type="unsure residue" description="I or L" evidence="3">
    <location>
        <position position="11"/>
    </location>
</feature>
<name>FAR_DELRA</name>
<sequence>AYRKPPFNGSIF</sequence>
<protein>
    <recommendedName>
        <fullName>SIFamide-related peptide</fullName>
        <shortName evidence="4">SIFa</shortName>
    </recommendedName>
    <alternativeName>
        <fullName>AYRKPPFNGSIF-amide</fullName>
    </alternativeName>
</protein>
<proteinExistence type="evidence at protein level"/>
<keyword id="KW-0027">Amidation</keyword>
<keyword id="KW-0903">Direct protein sequencing</keyword>
<keyword id="KW-0527">Neuropeptide</keyword>
<keyword id="KW-0964">Secreted</keyword>
<evidence type="ECO:0000250" key="1">
    <source>
        <dbReference type="UniProtKB" id="P10552"/>
    </source>
</evidence>
<evidence type="ECO:0000255" key="2"/>
<evidence type="ECO:0000269" key="3">
    <source>
    </source>
</evidence>
<evidence type="ECO:0000303" key="4">
    <source>
    </source>
</evidence>
<evidence type="ECO:0000305" key="5"/>